<accession>B3EMR5</accession>
<organism>
    <name type="scientific">Chlorobium phaeobacteroides (strain BS1)</name>
    <dbReference type="NCBI Taxonomy" id="331678"/>
    <lineage>
        <taxon>Bacteria</taxon>
        <taxon>Pseudomonadati</taxon>
        <taxon>Chlorobiota</taxon>
        <taxon>Chlorobiia</taxon>
        <taxon>Chlorobiales</taxon>
        <taxon>Chlorobiaceae</taxon>
        <taxon>Chlorobium/Pelodictyon group</taxon>
        <taxon>Chlorobium</taxon>
    </lineage>
</organism>
<protein>
    <recommendedName>
        <fullName evidence="1">HPr kinase/phosphorylase</fullName>
        <shortName evidence="1">HPrK/P</shortName>
        <ecNumber evidence="1">2.7.11.-</ecNumber>
        <ecNumber evidence="1">2.7.4.-</ecNumber>
    </recommendedName>
    <alternativeName>
        <fullName evidence="1">HPr(Ser) kinase/phosphorylase</fullName>
    </alternativeName>
</protein>
<proteinExistence type="inferred from homology"/>
<feature type="chain" id="PRO_1000139895" description="HPr kinase/phosphorylase">
    <location>
        <begin position="1"/>
        <end position="339"/>
    </location>
</feature>
<feature type="region of interest" description="Important for the catalytic mechanism of both phosphorylation and dephosphorylation" evidence="1">
    <location>
        <begin position="216"/>
        <end position="225"/>
    </location>
</feature>
<feature type="region of interest" description="Important for the catalytic mechanism of dephosphorylation" evidence="1">
    <location>
        <begin position="279"/>
        <end position="284"/>
    </location>
</feature>
<feature type="active site" evidence="1">
    <location>
        <position position="153"/>
    </location>
</feature>
<feature type="active site" evidence="1">
    <location>
        <position position="174"/>
    </location>
</feature>
<feature type="active site" description="Proton acceptor; for phosphorylation activity. Proton donor; for dephosphorylation activity" evidence="1">
    <location>
        <position position="192"/>
    </location>
</feature>
<feature type="active site" evidence="1">
    <location>
        <position position="258"/>
    </location>
</feature>
<feature type="binding site" evidence="1">
    <location>
        <begin position="168"/>
        <end position="175"/>
    </location>
    <ligand>
        <name>ATP</name>
        <dbReference type="ChEBI" id="CHEBI:30616"/>
    </ligand>
</feature>
<feature type="binding site" evidence="1">
    <location>
        <position position="175"/>
    </location>
    <ligand>
        <name>Mg(2+)</name>
        <dbReference type="ChEBI" id="CHEBI:18420"/>
    </ligand>
</feature>
<feature type="binding site" evidence="1">
    <location>
        <position position="217"/>
    </location>
    <ligand>
        <name>Mg(2+)</name>
        <dbReference type="ChEBI" id="CHEBI:18420"/>
    </ligand>
</feature>
<sequence length="339" mass="38432">MKFDQKGLKKQSMTVAYFFDNINNDLDIKLRRLNEVDEQKRRITDRDLHRPGLALAGFTNLFTYKRVQILGNTEMRFLNHLDDKTRKMAFENIVKYKVPCIIITSNNKLDPALLDMATEAGIPAFITRNSSTRTIFLITDFLVDRFSVYQQYHGSMVDVYGVGVMLVGKSGLGKSEVALDLVERGHRLVADDAVVINRKGEKTLIASGNHVIGHFMEIRGLGVVDVKAAFGIRAIREKKVVQVVVELMEWNEDMDYERLGLDTKTTKILGVEVPLIQLPINPGKNITVIIEVVALNYLLKQYSGYVAAEALEERIKTSIDDEAMMTTRFGSNYLTKDYE</sequence>
<dbReference type="EC" id="2.7.11.-" evidence="1"/>
<dbReference type="EC" id="2.7.4.-" evidence="1"/>
<dbReference type="EMBL" id="CP001101">
    <property type="protein sequence ID" value="ACE03543.1"/>
    <property type="molecule type" value="Genomic_DNA"/>
</dbReference>
<dbReference type="SMR" id="B3EMR5"/>
<dbReference type="STRING" id="331678.Cphamn1_0584"/>
<dbReference type="KEGG" id="cpb:Cphamn1_0584"/>
<dbReference type="eggNOG" id="COG1493">
    <property type="taxonomic scope" value="Bacteria"/>
</dbReference>
<dbReference type="HOGENOM" id="CLU_052030_0_1_10"/>
<dbReference type="OrthoDB" id="9778803at2"/>
<dbReference type="GO" id="GO:0005524">
    <property type="term" value="F:ATP binding"/>
    <property type="evidence" value="ECO:0007669"/>
    <property type="project" value="UniProtKB-UniRule"/>
</dbReference>
<dbReference type="GO" id="GO:0000287">
    <property type="term" value="F:magnesium ion binding"/>
    <property type="evidence" value="ECO:0007669"/>
    <property type="project" value="UniProtKB-UniRule"/>
</dbReference>
<dbReference type="GO" id="GO:0000155">
    <property type="term" value="F:phosphorelay sensor kinase activity"/>
    <property type="evidence" value="ECO:0007669"/>
    <property type="project" value="InterPro"/>
</dbReference>
<dbReference type="GO" id="GO:0004674">
    <property type="term" value="F:protein serine/threonine kinase activity"/>
    <property type="evidence" value="ECO:0007669"/>
    <property type="project" value="UniProtKB-KW"/>
</dbReference>
<dbReference type="GO" id="GO:0004712">
    <property type="term" value="F:protein serine/threonine/tyrosine kinase activity"/>
    <property type="evidence" value="ECO:0007669"/>
    <property type="project" value="UniProtKB-UniRule"/>
</dbReference>
<dbReference type="GO" id="GO:0006109">
    <property type="term" value="P:regulation of carbohydrate metabolic process"/>
    <property type="evidence" value="ECO:0007669"/>
    <property type="project" value="UniProtKB-UniRule"/>
</dbReference>
<dbReference type="CDD" id="cd01918">
    <property type="entry name" value="HprK_C"/>
    <property type="match status" value="1"/>
</dbReference>
<dbReference type="FunFam" id="3.40.50.300:FF:000174">
    <property type="entry name" value="HPr kinase/phosphorylase"/>
    <property type="match status" value="1"/>
</dbReference>
<dbReference type="Gene3D" id="3.40.1390.20">
    <property type="entry name" value="HprK N-terminal domain-like"/>
    <property type="match status" value="1"/>
</dbReference>
<dbReference type="Gene3D" id="3.40.50.300">
    <property type="entry name" value="P-loop containing nucleotide triphosphate hydrolases"/>
    <property type="match status" value="1"/>
</dbReference>
<dbReference type="HAMAP" id="MF_01249">
    <property type="entry name" value="HPr_kinase"/>
    <property type="match status" value="1"/>
</dbReference>
<dbReference type="InterPro" id="IPR003755">
    <property type="entry name" value="HPr(Ser)_kin/Pase"/>
</dbReference>
<dbReference type="InterPro" id="IPR011104">
    <property type="entry name" value="Hpr_kin/Pase_C"/>
</dbReference>
<dbReference type="InterPro" id="IPR011126">
    <property type="entry name" value="Hpr_kin/Pase_Hpr_N"/>
</dbReference>
<dbReference type="InterPro" id="IPR027417">
    <property type="entry name" value="P-loop_NTPase"/>
</dbReference>
<dbReference type="InterPro" id="IPR028979">
    <property type="entry name" value="Ser_kin/Pase_Hpr-like_N_sf"/>
</dbReference>
<dbReference type="NCBIfam" id="TIGR00679">
    <property type="entry name" value="hpr-ser"/>
    <property type="match status" value="1"/>
</dbReference>
<dbReference type="PANTHER" id="PTHR30305:SF1">
    <property type="entry name" value="HPR KINASE_PHOSPHORYLASE"/>
    <property type="match status" value="1"/>
</dbReference>
<dbReference type="PANTHER" id="PTHR30305">
    <property type="entry name" value="PROTEIN YJDM-RELATED"/>
    <property type="match status" value="1"/>
</dbReference>
<dbReference type="Pfam" id="PF07475">
    <property type="entry name" value="Hpr_kinase_C"/>
    <property type="match status" value="1"/>
</dbReference>
<dbReference type="Pfam" id="PF02603">
    <property type="entry name" value="Hpr_kinase_N"/>
    <property type="match status" value="1"/>
</dbReference>
<dbReference type="SUPFAM" id="SSF75138">
    <property type="entry name" value="HprK N-terminal domain-like"/>
    <property type="match status" value="1"/>
</dbReference>
<dbReference type="SUPFAM" id="SSF53795">
    <property type="entry name" value="PEP carboxykinase-like"/>
    <property type="match status" value="1"/>
</dbReference>
<gene>
    <name evidence="1" type="primary">hprK</name>
    <name type="ordered locus">Cphamn1_0584</name>
</gene>
<name>HPRK_CHLPB</name>
<evidence type="ECO:0000255" key="1">
    <source>
        <dbReference type="HAMAP-Rule" id="MF_01249"/>
    </source>
</evidence>
<comment type="function">
    <text evidence="1">Catalyzes the ATP- as well as the pyrophosphate-dependent phosphorylation of a specific serine residue in HPr, a phosphocarrier protein of the phosphoenolpyruvate-dependent sugar phosphotransferase system (PTS). HprK/P also catalyzes the pyrophosphate-producing, inorganic phosphate-dependent dephosphorylation (phosphorolysis) of seryl-phosphorylated HPr (P-Ser-HPr).</text>
</comment>
<comment type="catalytic activity">
    <reaction evidence="1">
        <text>[HPr protein]-L-serine + ATP = [HPr protein]-O-phospho-L-serine + ADP + H(+)</text>
        <dbReference type="Rhea" id="RHEA:46600"/>
        <dbReference type="Rhea" id="RHEA-COMP:11602"/>
        <dbReference type="Rhea" id="RHEA-COMP:11603"/>
        <dbReference type="ChEBI" id="CHEBI:15378"/>
        <dbReference type="ChEBI" id="CHEBI:29999"/>
        <dbReference type="ChEBI" id="CHEBI:30616"/>
        <dbReference type="ChEBI" id="CHEBI:83421"/>
        <dbReference type="ChEBI" id="CHEBI:456216"/>
    </reaction>
</comment>
<comment type="catalytic activity">
    <reaction evidence="1">
        <text>[HPr protein]-O-phospho-L-serine + phosphate + H(+) = [HPr protein]-L-serine + diphosphate</text>
        <dbReference type="Rhea" id="RHEA:46604"/>
        <dbReference type="Rhea" id="RHEA-COMP:11602"/>
        <dbReference type="Rhea" id="RHEA-COMP:11603"/>
        <dbReference type="ChEBI" id="CHEBI:15378"/>
        <dbReference type="ChEBI" id="CHEBI:29999"/>
        <dbReference type="ChEBI" id="CHEBI:33019"/>
        <dbReference type="ChEBI" id="CHEBI:43474"/>
        <dbReference type="ChEBI" id="CHEBI:83421"/>
    </reaction>
</comment>
<comment type="cofactor">
    <cofactor evidence="1">
        <name>Mg(2+)</name>
        <dbReference type="ChEBI" id="CHEBI:18420"/>
    </cofactor>
</comment>
<comment type="subunit">
    <text evidence="1">Homohexamer.</text>
</comment>
<comment type="domain">
    <text evidence="1">The Walker A ATP-binding motif also binds Pi and PPi.</text>
</comment>
<comment type="miscellaneous">
    <text evidence="1">Both phosphorylation and phosphorolysis are carried out by the same active site and suggest a common mechanism for both reactions.</text>
</comment>
<comment type="similarity">
    <text evidence="1">Belongs to the HPrK/P family.</text>
</comment>
<keyword id="KW-0067">ATP-binding</keyword>
<keyword id="KW-0418">Kinase</keyword>
<keyword id="KW-0460">Magnesium</keyword>
<keyword id="KW-0479">Metal-binding</keyword>
<keyword id="KW-0511">Multifunctional enzyme</keyword>
<keyword id="KW-0547">Nucleotide-binding</keyword>
<keyword id="KW-0723">Serine/threonine-protein kinase</keyword>
<keyword id="KW-0808">Transferase</keyword>
<reference key="1">
    <citation type="submission" date="2008-06" db="EMBL/GenBank/DDBJ databases">
        <title>Complete sequence of Chlorobium phaeobacteroides BS1.</title>
        <authorList>
            <consortium name="US DOE Joint Genome Institute"/>
            <person name="Lucas S."/>
            <person name="Copeland A."/>
            <person name="Lapidus A."/>
            <person name="Glavina del Rio T."/>
            <person name="Dalin E."/>
            <person name="Tice H."/>
            <person name="Bruce D."/>
            <person name="Goodwin L."/>
            <person name="Pitluck S."/>
            <person name="Schmutz J."/>
            <person name="Larimer F."/>
            <person name="Land M."/>
            <person name="Hauser L."/>
            <person name="Kyrpides N."/>
            <person name="Ovchinnikova G."/>
            <person name="Li T."/>
            <person name="Liu Z."/>
            <person name="Zhao F."/>
            <person name="Overmann J."/>
            <person name="Bryant D.A."/>
            <person name="Richardson P."/>
        </authorList>
    </citation>
    <scope>NUCLEOTIDE SEQUENCE [LARGE SCALE GENOMIC DNA]</scope>
    <source>
        <strain>BS1</strain>
    </source>
</reference>